<accession>Q9BVH7</accession>
<accession>B1AK82</accession>
<comment type="function">
    <text evidence="2 5">Predominantly catalyzes the biosynthesis of ganglioside GD1alpha from GM1b in the brain, by transferring the sialyl group (N-acetyl-alpha-neuraminyl or NeuAc) from CMP-NeuAc to the GalNAc residue on the NeuAc-alpha-2,3-Gal-beta-1,3-GalNAc sequence of GM1b (PubMed:12668675). GD1alpha is a critical molecule in the communication and interaction between neuronal cells and their supportive cells, particularly in brain tissues, and functions as an adhesion molecule in the process of metastasis (By similarity). Also shows activity towards sialyl Lc4Cer (N-acetyl-alpha-neuraminosyl-(2-&gt;3)-beta-D-galactosyl-(1-&gt;3)-N-acetyl-beta-D-glucosaminyl-(1-&gt;3)-beta-D-galactosyl-(1-&gt;4)-beta-D-glucosyl-(1&lt;-&gt;1')-N-acyl-sphing-4-enine) generating disialyl Lc4Cer, which can lead to the synthesis of disialyl Lewis a (Le(a)), suggested to be a cancer-associated antigen (PubMed:12668675).</text>
</comment>
<comment type="catalytic activity">
    <reaction evidence="5">
        <text>a ganglioside GM1b (d18:1(4E)) + CMP-N-acetyl-beta-neuraminate = a ganglioside GD1alpha (d18:1(4E)) + CMP + H(+)</text>
        <dbReference type="Rhea" id="RHEA:41968"/>
        <dbReference type="ChEBI" id="CHEBI:15378"/>
        <dbReference type="ChEBI" id="CHEBI:57812"/>
        <dbReference type="ChEBI" id="CHEBI:60377"/>
        <dbReference type="ChEBI" id="CHEBI:78568"/>
        <dbReference type="ChEBI" id="CHEBI:78569"/>
    </reaction>
    <physiologicalReaction direction="left-to-right" evidence="8">
        <dbReference type="Rhea" id="RHEA:41969"/>
    </physiologicalReaction>
</comment>
<comment type="catalytic activity">
    <reaction evidence="5">
        <text>N-acetyl-alpha-neuraminosyl-(2-&gt;3)-beta-D-galactosyl-(1-&gt;3)-N-acetyl-beta-D-glucosaminyl-(1-&gt;3)-beta-D-galactosyl-(1-&gt;4)-beta-D-glucosyl-(1&lt;-&gt;1')-N-acyl-sphing-4-enine + CMP-N-acetyl-beta-neuraminate = N-acetyl-alpha-neuraminosyl-(2-&gt;3)-beta-D-galactosyl-(1-&gt;3)-[N-acetyl-alpha-neuraminosyl-(2-&gt;6)]-N-acetyl-beta-D-glucosaminyl-(1-&gt;3)-beta-D-galactosyl-(1-&gt;4)-beta-D-glucosyl-(1&lt;-&gt;1')-N-acyl-sphing-4-enine + CMP + H(+)</text>
        <dbReference type="Rhea" id="RHEA:47884"/>
        <dbReference type="ChEBI" id="CHEBI:15378"/>
        <dbReference type="ChEBI" id="CHEBI:57812"/>
        <dbReference type="ChEBI" id="CHEBI:60377"/>
        <dbReference type="ChEBI" id="CHEBI:88073"/>
        <dbReference type="ChEBI" id="CHEBI:88079"/>
    </reaction>
    <physiologicalReaction direction="left-to-right" evidence="8">
        <dbReference type="Rhea" id="RHEA:47885"/>
    </physiologicalReaction>
</comment>
<comment type="biophysicochemical properties">
    <kinetics>
        <KM evidence="5">0.56 mM for GMb1</KM>
        <KM evidence="5">0.9 mM for sialyl Lc4Cer</KM>
    </kinetics>
</comment>
<comment type="pathway">
    <text evidence="8">Glycolipid biosynthesis.</text>
</comment>
<comment type="subcellular location">
    <subcellularLocation>
        <location evidence="1">Golgi apparatus membrane</location>
        <topology evidence="1">Single-pass type II membrane protein</topology>
    </subcellularLocation>
</comment>
<comment type="similarity">
    <text evidence="7">Belongs to the glycosyltransferase 29 family.</text>
</comment>
<comment type="online information" name="Functional Glycomics Gateway - GTase">
    <link uri="http://www.functionalglycomics.org/glycomics/molecule/jsp/glycoEnzyme/viewGlycoEnzyme.jsp?gbpId=gt_hum_634"/>
    <text>ST6GalNAc V</text>
</comment>
<organism>
    <name type="scientific">Homo sapiens</name>
    <name type="common">Human</name>
    <dbReference type="NCBI Taxonomy" id="9606"/>
    <lineage>
        <taxon>Eukaryota</taxon>
        <taxon>Metazoa</taxon>
        <taxon>Chordata</taxon>
        <taxon>Craniata</taxon>
        <taxon>Vertebrata</taxon>
        <taxon>Euteleostomi</taxon>
        <taxon>Mammalia</taxon>
        <taxon>Eutheria</taxon>
        <taxon>Euarchontoglires</taxon>
        <taxon>Primates</taxon>
        <taxon>Haplorrhini</taxon>
        <taxon>Catarrhini</taxon>
        <taxon>Hominidae</taxon>
        <taxon>Homo</taxon>
    </lineage>
</organism>
<feature type="chain" id="PRO_0000149280" description="Alpha-N-acetylgalactosaminide alpha-2,6-sialyltransferase 5">
    <location>
        <begin position="1"/>
        <end position="336"/>
    </location>
</feature>
<feature type="topological domain" description="Cytoplasmic" evidence="3">
    <location>
        <begin position="1"/>
        <end position="8"/>
    </location>
</feature>
<feature type="transmembrane region" description="Helical; Signal-anchor for type II membrane protein" evidence="3">
    <location>
        <begin position="9"/>
        <end position="29"/>
    </location>
</feature>
<feature type="topological domain" description="Lumenal" evidence="3">
    <location>
        <begin position="30"/>
        <end position="336"/>
    </location>
</feature>
<feature type="region of interest" description="Disordered" evidence="4">
    <location>
        <begin position="32"/>
        <end position="81"/>
    </location>
</feature>
<feature type="compositionally biased region" description="Low complexity" evidence="4">
    <location>
        <begin position="38"/>
        <end position="49"/>
    </location>
</feature>
<feature type="compositionally biased region" description="Polar residues" evidence="4">
    <location>
        <begin position="50"/>
        <end position="67"/>
    </location>
</feature>
<feature type="glycosylation site" description="N-linked (GlcNAc...) asparagine" evidence="3">
    <location>
        <position position="137"/>
    </location>
</feature>
<feature type="glycosylation site" description="N-linked (GlcNAc...) asparagine" evidence="3">
    <location>
        <position position="161"/>
    </location>
</feature>
<feature type="disulfide bond" evidence="1">
    <location>
        <begin position="96"/>
        <end position="245"/>
    </location>
</feature>
<protein>
    <recommendedName>
        <fullName>Alpha-N-acetylgalactosaminide alpha-2,6-sialyltransferase 5</fullName>
        <ecNumber evidence="5">2.4.99.-</ecNumber>
    </recommendedName>
    <alternativeName>
        <fullName>GD1 alpha synthase</fullName>
    </alternativeName>
    <alternativeName>
        <fullName>GalNAc alpha-2,6-sialyltransferase V</fullName>
    </alternativeName>
    <alternativeName>
        <fullName evidence="6">ST6GalNAc V</fullName>
        <shortName>ST6GalNAcV</shortName>
    </alternativeName>
    <alternativeName>
        <fullName>Sialyltransferase 7E</fullName>
        <shortName>SIAT7-E</shortName>
    </alternativeName>
</protein>
<sequence length="336" mass="38443">MKTLMRHGLAVCLALTTMCTSLLLVYSSLGGQKERPPQQQQQQQQQQQQASATGSSQPAAESSTQQRPGVPAGPRPLDGYLGVADHKPLKMHCRDCALVTSSGHLLHSRQGSQIDQTECVIRMNDAPTRGYGRDVGNRTSLRVIAHSSIQRILRNRHDLLNVSQGTVFIFWGPSSYMRRDGKGQVYNNLHLLSQVLPRLKAFMITRHKMLQFDELFKQETGKDRKISNTWLSTGWFTMTIALELCDRINVYGMVPPDFCRDPNHPSVPYHYYEPFGPDECTMYLSHERGRKGSHHRFITEKRVFKNWARTFNIHFFQPDWKPESLAINHPENKPVF</sequence>
<name>SIA7E_HUMAN</name>
<dbReference type="EC" id="2.4.99.-" evidence="5"/>
<dbReference type="EMBL" id="AJ507292">
    <property type="protein sequence ID" value="CAD45372.1"/>
    <property type="molecule type" value="mRNA"/>
</dbReference>
<dbReference type="EMBL" id="AK056241">
    <property type="protein sequence ID" value="BAB71127.1"/>
    <property type="molecule type" value="mRNA"/>
</dbReference>
<dbReference type="EMBL" id="AC099060">
    <property type="status" value="NOT_ANNOTATED_CDS"/>
    <property type="molecule type" value="Genomic_DNA"/>
</dbReference>
<dbReference type="EMBL" id="AL035409">
    <property type="status" value="NOT_ANNOTATED_CDS"/>
    <property type="molecule type" value="Genomic_DNA"/>
</dbReference>
<dbReference type="EMBL" id="CH471059">
    <property type="protein sequence ID" value="EAX06386.1"/>
    <property type="molecule type" value="Genomic_DNA"/>
</dbReference>
<dbReference type="EMBL" id="BC001201">
    <property type="protein sequence ID" value="AAH01201.1"/>
    <property type="molecule type" value="mRNA"/>
</dbReference>
<dbReference type="CCDS" id="CCDS673.1"/>
<dbReference type="RefSeq" id="NP_112227.1">
    <property type="nucleotide sequence ID" value="NM_030965.3"/>
</dbReference>
<dbReference type="SMR" id="Q9BVH7"/>
<dbReference type="BioGRID" id="123600">
    <property type="interactions" value="4"/>
</dbReference>
<dbReference type="FunCoup" id="Q9BVH7">
    <property type="interactions" value="200"/>
</dbReference>
<dbReference type="IntAct" id="Q9BVH7">
    <property type="interactions" value="3"/>
</dbReference>
<dbReference type="STRING" id="9606.ENSP00000417583"/>
<dbReference type="SwissLipids" id="SLP:000001365"/>
<dbReference type="CAZy" id="GT29">
    <property type="family name" value="Glycosyltransferase Family 29"/>
</dbReference>
<dbReference type="GlyCosmos" id="Q9BVH7">
    <property type="glycosylation" value="2 sites, No reported glycans"/>
</dbReference>
<dbReference type="GlyGen" id="Q9BVH7">
    <property type="glycosylation" value="2 sites"/>
</dbReference>
<dbReference type="iPTMnet" id="Q9BVH7"/>
<dbReference type="PhosphoSitePlus" id="Q9BVH7"/>
<dbReference type="BioMuta" id="ST6GALNAC5"/>
<dbReference type="DMDM" id="21759442"/>
<dbReference type="MassIVE" id="Q9BVH7"/>
<dbReference type="PaxDb" id="9606-ENSP00000417583"/>
<dbReference type="PeptideAtlas" id="Q9BVH7"/>
<dbReference type="ProteomicsDB" id="79206"/>
<dbReference type="Antibodypedia" id="33478">
    <property type="antibodies" value="105 antibodies from 22 providers"/>
</dbReference>
<dbReference type="DNASU" id="81849"/>
<dbReference type="Ensembl" id="ENST00000477717.6">
    <property type="protein sequence ID" value="ENSP00000417583.1"/>
    <property type="gene ID" value="ENSG00000117069.15"/>
</dbReference>
<dbReference type="GeneID" id="81849"/>
<dbReference type="KEGG" id="hsa:81849"/>
<dbReference type="MANE-Select" id="ENST00000477717.6">
    <property type="protein sequence ID" value="ENSP00000417583.1"/>
    <property type="RefSeq nucleotide sequence ID" value="NM_030965.3"/>
    <property type="RefSeq protein sequence ID" value="NP_112227.1"/>
</dbReference>
<dbReference type="UCSC" id="uc001dhi.4">
    <property type="organism name" value="human"/>
</dbReference>
<dbReference type="AGR" id="HGNC:19342"/>
<dbReference type="CTD" id="81849"/>
<dbReference type="DisGeNET" id="81849"/>
<dbReference type="GeneCards" id="ST6GALNAC5"/>
<dbReference type="HGNC" id="HGNC:19342">
    <property type="gene designation" value="ST6GALNAC5"/>
</dbReference>
<dbReference type="HPA" id="ENSG00000117069">
    <property type="expression patterns" value="Tissue enhanced (brain)"/>
</dbReference>
<dbReference type="MIM" id="610134">
    <property type="type" value="gene"/>
</dbReference>
<dbReference type="neXtProt" id="NX_Q9BVH7"/>
<dbReference type="OpenTargets" id="ENSG00000117069"/>
<dbReference type="PharmGKB" id="PA134924485"/>
<dbReference type="VEuPathDB" id="HostDB:ENSG00000117069"/>
<dbReference type="eggNOG" id="KOG2692">
    <property type="taxonomic scope" value="Eukaryota"/>
</dbReference>
<dbReference type="GeneTree" id="ENSGT00940000157634"/>
<dbReference type="HOGENOM" id="CLU_061099_0_0_1"/>
<dbReference type="InParanoid" id="Q9BVH7"/>
<dbReference type="OMA" id="PVNHAKI"/>
<dbReference type="OrthoDB" id="10264956at2759"/>
<dbReference type="PAN-GO" id="Q9BVH7">
    <property type="GO annotations" value="3 GO annotations based on evolutionary models"/>
</dbReference>
<dbReference type="PhylomeDB" id="Q9BVH7"/>
<dbReference type="TreeFam" id="TF323961"/>
<dbReference type="BRENDA" id="2.4.99.7">
    <property type="organism ID" value="2681"/>
</dbReference>
<dbReference type="PathwayCommons" id="Q9BVH7"/>
<dbReference type="Reactome" id="R-HSA-4085001">
    <property type="pathway name" value="Sialic acid metabolism"/>
</dbReference>
<dbReference type="Reactome" id="R-HSA-9840309">
    <property type="pathway name" value="Glycosphingolipid biosynthesis"/>
</dbReference>
<dbReference type="SignaLink" id="Q9BVH7"/>
<dbReference type="BioGRID-ORCS" id="81849">
    <property type="hits" value="8 hits in 1137 CRISPR screens"/>
</dbReference>
<dbReference type="ChiTaRS" id="ST6GALNAC5">
    <property type="organism name" value="human"/>
</dbReference>
<dbReference type="GenomeRNAi" id="81849"/>
<dbReference type="Pharos" id="Q9BVH7">
    <property type="development level" value="Tbio"/>
</dbReference>
<dbReference type="PRO" id="PR:Q9BVH7"/>
<dbReference type="Proteomes" id="UP000005640">
    <property type="component" value="Chromosome 1"/>
</dbReference>
<dbReference type="RNAct" id="Q9BVH7">
    <property type="molecule type" value="protein"/>
</dbReference>
<dbReference type="Bgee" id="ENSG00000117069">
    <property type="expression patterns" value="Expressed in CA1 field of hippocampus and 125 other cell types or tissues"/>
</dbReference>
<dbReference type="ExpressionAtlas" id="Q9BVH7">
    <property type="expression patterns" value="baseline and differential"/>
</dbReference>
<dbReference type="GO" id="GO:0000139">
    <property type="term" value="C:Golgi membrane"/>
    <property type="evidence" value="ECO:0000304"/>
    <property type="project" value="Reactome"/>
</dbReference>
<dbReference type="GO" id="GO:0001665">
    <property type="term" value="F:alpha-N-acetylgalactosaminide alpha-2,6-sialyltransferase activity"/>
    <property type="evidence" value="ECO:0000250"/>
    <property type="project" value="BHF-UCL"/>
</dbReference>
<dbReference type="GO" id="GO:0008373">
    <property type="term" value="F:sialyltransferase activity"/>
    <property type="evidence" value="ECO:0000250"/>
    <property type="project" value="BHF-UCL"/>
</dbReference>
<dbReference type="GO" id="GO:0001574">
    <property type="term" value="P:ganglioside biosynthetic process"/>
    <property type="evidence" value="ECO:0000318"/>
    <property type="project" value="GO_Central"/>
</dbReference>
<dbReference type="GO" id="GO:0006688">
    <property type="term" value="P:glycosphingolipid biosynthetic process"/>
    <property type="evidence" value="ECO:0000250"/>
    <property type="project" value="BHF-UCL"/>
</dbReference>
<dbReference type="GO" id="GO:0009312">
    <property type="term" value="P:oligosaccharide biosynthetic process"/>
    <property type="evidence" value="ECO:0000250"/>
    <property type="project" value="BHF-UCL"/>
</dbReference>
<dbReference type="GO" id="GO:0009311">
    <property type="term" value="P:oligosaccharide metabolic process"/>
    <property type="evidence" value="ECO:0000318"/>
    <property type="project" value="GO_Central"/>
</dbReference>
<dbReference type="GO" id="GO:0006486">
    <property type="term" value="P:protein glycosylation"/>
    <property type="evidence" value="ECO:0007669"/>
    <property type="project" value="InterPro"/>
</dbReference>
<dbReference type="CDD" id="cd23976">
    <property type="entry name" value="GT29_ST6GALNAC5"/>
    <property type="match status" value="1"/>
</dbReference>
<dbReference type="FunFam" id="3.90.1480.20:FF:000011">
    <property type="entry name" value="ST6 N-acetylgalactosaminide alpha-2,6-sialyltransferase 5"/>
    <property type="match status" value="1"/>
</dbReference>
<dbReference type="Gene3D" id="3.90.1480.20">
    <property type="entry name" value="Glycosyl transferase family 29"/>
    <property type="match status" value="1"/>
</dbReference>
<dbReference type="InterPro" id="IPR001675">
    <property type="entry name" value="Glyco_trans_29"/>
</dbReference>
<dbReference type="InterPro" id="IPR038578">
    <property type="entry name" value="GT29-like_sf"/>
</dbReference>
<dbReference type="InterPro" id="IPR012163">
    <property type="entry name" value="Sialyl_trans"/>
</dbReference>
<dbReference type="PANTHER" id="PTHR45906">
    <property type="entry name" value="ALPHA-N-ACETYL-NEURAMINYL-2,3-BETA-GALACTOSYL-1, 3-N-ACETYL-GALACTOSAMINIDE ALPHA-2,6-SIALYLTRANSFERASE-LIKE"/>
    <property type="match status" value="1"/>
</dbReference>
<dbReference type="PANTHER" id="PTHR45906:SF5">
    <property type="entry name" value="ALPHA-N-ACETYLGALACTOSAMINIDE ALPHA-2,6-SIALYLTRANSFERASE 5"/>
    <property type="match status" value="1"/>
</dbReference>
<dbReference type="Pfam" id="PF00777">
    <property type="entry name" value="Glyco_transf_29"/>
    <property type="match status" value="1"/>
</dbReference>
<dbReference type="PIRSF" id="PIRSF005557">
    <property type="entry name" value="Sialyl_trans"/>
    <property type="match status" value="1"/>
</dbReference>
<reference key="1">
    <citation type="submission" date="2002-09" db="EMBL/GenBank/DDBJ databases">
        <title>Molecular cloning and expression of human ST6GALNAC V.</title>
        <authorList>
            <person name="Harduin-Lepers A."/>
        </authorList>
    </citation>
    <scope>NUCLEOTIDE SEQUENCE [MRNA]</scope>
</reference>
<reference key="2">
    <citation type="journal article" date="2004" name="Nat. Genet.">
        <title>Complete sequencing and characterization of 21,243 full-length human cDNAs.</title>
        <authorList>
            <person name="Ota T."/>
            <person name="Suzuki Y."/>
            <person name="Nishikawa T."/>
            <person name="Otsuki T."/>
            <person name="Sugiyama T."/>
            <person name="Irie R."/>
            <person name="Wakamatsu A."/>
            <person name="Hayashi K."/>
            <person name="Sato H."/>
            <person name="Nagai K."/>
            <person name="Kimura K."/>
            <person name="Makita H."/>
            <person name="Sekine M."/>
            <person name="Obayashi M."/>
            <person name="Nishi T."/>
            <person name="Shibahara T."/>
            <person name="Tanaka T."/>
            <person name="Ishii S."/>
            <person name="Yamamoto J."/>
            <person name="Saito K."/>
            <person name="Kawai Y."/>
            <person name="Isono Y."/>
            <person name="Nakamura Y."/>
            <person name="Nagahari K."/>
            <person name="Murakami K."/>
            <person name="Yasuda T."/>
            <person name="Iwayanagi T."/>
            <person name="Wagatsuma M."/>
            <person name="Shiratori A."/>
            <person name="Sudo H."/>
            <person name="Hosoiri T."/>
            <person name="Kaku Y."/>
            <person name="Kodaira H."/>
            <person name="Kondo H."/>
            <person name="Sugawara M."/>
            <person name="Takahashi M."/>
            <person name="Kanda K."/>
            <person name="Yokoi T."/>
            <person name="Furuya T."/>
            <person name="Kikkawa E."/>
            <person name="Omura Y."/>
            <person name="Abe K."/>
            <person name="Kamihara K."/>
            <person name="Katsuta N."/>
            <person name="Sato K."/>
            <person name="Tanikawa M."/>
            <person name="Yamazaki M."/>
            <person name="Ninomiya K."/>
            <person name="Ishibashi T."/>
            <person name="Yamashita H."/>
            <person name="Murakawa K."/>
            <person name="Fujimori K."/>
            <person name="Tanai H."/>
            <person name="Kimata M."/>
            <person name="Watanabe M."/>
            <person name="Hiraoka S."/>
            <person name="Chiba Y."/>
            <person name="Ishida S."/>
            <person name="Ono Y."/>
            <person name="Takiguchi S."/>
            <person name="Watanabe S."/>
            <person name="Yosida M."/>
            <person name="Hotuta T."/>
            <person name="Kusano J."/>
            <person name="Kanehori K."/>
            <person name="Takahashi-Fujii A."/>
            <person name="Hara H."/>
            <person name="Tanase T.-O."/>
            <person name="Nomura Y."/>
            <person name="Togiya S."/>
            <person name="Komai F."/>
            <person name="Hara R."/>
            <person name="Takeuchi K."/>
            <person name="Arita M."/>
            <person name="Imose N."/>
            <person name="Musashino K."/>
            <person name="Yuuki H."/>
            <person name="Oshima A."/>
            <person name="Sasaki N."/>
            <person name="Aotsuka S."/>
            <person name="Yoshikawa Y."/>
            <person name="Matsunawa H."/>
            <person name="Ichihara T."/>
            <person name="Shiohata N."/>
            <person name="Sano S."/>
            <person name="Moriya S."/>
            <person name="Momiyama H."/>
            <person name="Satoh N."/>
            <person name="Takami S."/>
            <person name="Terashima Y."/>
            <person name="Suzuki O."/>
            <person name="Nakagawa S."/>
            <person name="Senoh A."/>
            <person name="Mizoguchi H."/>
            <person name="Goto Y."/>
            <person name="Shimizu F."/>
            <person name="Wakebe H."/>
            <person name="Hishigaki H."/>
            <person name="Watanabe T."/>
            <person name="Sugiyama A."/>
            <person name="Takemoto M."/>
            <person name="Kawakami B."/>
            <person name="Yamazaki M."/>
            <person name="Watanabe K."/>
            <person name="Kumagai A."/>
            <person name="Itakura S."/>
            <person name="Fukuzumi Y."/>
            <person name="Fujimori Y."/>
            <person name="Komiyama M."/>
            <person name="Tashiro H."/>
            <person name="Tanigami A."/>
            <person name="Fujiwara T."/>
            <person name="Ono T."/>
            <person name="Yamada K."/>
            <person name="Fujii Y."/>
            <person name="Ozaki K."/>
            <person name="Hirao M."/>
            <person name="Ohmori Y."/>
            <person name="Kawabata A."/>
            <person name="Hikiji T."/>
            <person name="Kobatake N."/>
            <person name="Inagaki H."/>
            <person name="Ikema Y."/>
            <person name="Okamoto S."/>
            <person name="Okitani R."/>
            <person name="Kawakami T."/>
            <person name="Noguchi S."/>
            <person name="Itoh T."/>
            <person name="Shigeta K."/>
            <person name="Senba T."/>
            <person name="Matsumura K."/>
            <person name="Nakajima Y."/>
            <person name="Mizuno T."/>
            <person name="Morinaga M."/>
            <person name="Sasaki M."/>
            <person name="Togashi T."/>
            <person name="Oyama M."/>
            <person name="Hata H."/>
            <person name="Watanabe M."/>
            <person name="Komatsu T."/>
            <person name="Mizushima-Sugano J."/>
            <person name="Satoh T."/>
            <person name="Shirai Y."/>
            <person name="Takahashi Y."/>
            <person name="Nakagawa K."/>
            <person name="Okumura K."/>
            <person name="Nagase T."/>
            <person name="Nomura N."/>
            <person name="Kikuchi H."/>
            <person name="Masuho Y."/>
            <person name="Yamashita R."/>
            <person name="Nakai K."/>
            <person name="Yada T."/>
            <person name="Nakamura Y."/>
            <person name="Ohara O."/>
            <person name="Isogai T."/>
            <person name="Sugano S."/>
        </authorList>
    </citation>
    <scope>NUCLEOTIDE SEQUENCE [LARGE SCALE MRNA]</scope>
</reference>
<reference key="3">
    <citation type="journal article" date="2006" name="Nature">
        <title>The DNA sequence and biological annotation of human chromosome 1.</title>
        <authorList>
            <person name="Gregory S.G."/>
            <person name="Barlow K.F."/>
            <person name="McLay K.E."/>
            <person name="Kaul R."/>
            <person name="Swarbreck D."/>
            <person name="Dunham A."/>
            <person name="Scott C.E."/>
            <person name="Howe K.L."/>
            <person name="Woodfine K."/>
            <person name="Spencer C.C.A."/>
            <person name="Jones M.C."/>
            <person name="Gillson C."/>
            <person name="Searle S."/>
            <person name="Zhou Y."/>
            <person name="Kokocinski F."/>
            <person name="McDonald L."/>
            <person name="Evans R."/>
            <person name="Phillips K."/>
            <person name="Atkinson A."/>
            <person name="Cooper R."/>
            <person name="Jones C."/>
            <person name="Hall R.E."/>
            <person name="Andrews T.D."/>
            <person name="Lloyd C."/>
            <person name="Ainscough R."/>
            <person name="Almeida J.P."/>
            <person name="Ambrose K.D."/>
            <person name="Anderson F."/>
            <person name="Andrew R.W."/>
            <person name="Ashwell R.I.S."/>
            <person name="Aubin K."/>
            <person name="Babbage A.K."/>
            <person name="Bagguley C.L."/>
            <person name="Bailey J."/>
            <person name="Beasley H."/>
            <person name="Bethel G."/>
            <person name="Bird C.P."/>
            <person name="Bray-Allen S."/>
            <person name="Brown J.Y."/>
            <person name="Brown A.J."/>
            <person name="Buckley D."/>
            <person name="Burton J."/>
            <person name="Bye J."/>
            <person name="Carder C."/>
            <person name="Chapman J.C."/>
            <person name="Clark S.Y."/>
            <person name="Clarke G."/>
            <person name="Clee C."/>
            <person name="Cobley V."/>
            <person name="Collier R.E."/>
            <person name="Corby N."/>
            <person name="Coville G.J."/>
            <person name="Davies J."/>
            <person name="Deadman R."/>
            <person name="Dunn M."/>
            <person name="Earthrowl M."/>
            <person name="Ellington A.G."/>
            <person name="Errington H."/>
            <person name="Frankish A."/>
            <person name="Frankland J."/>
            <person name="French L."/>
            <person name="Garner P."/>
            <person name="Garnett J."/>
            <person name="Gay L."/>
            <person name="Ghori M.R.J."/>
            <person name="Gibson R."/>
            <person name="Gilby L.M."/>
            <person name="Gillett W."/>
            <person name="Glithero R.J."/>
            <person name="Grafham D.V."/>
            <person name="Griffiths C."/>
            <person name="Griffiths-Jones S."/>
            <person name="Grocock R."/>
            <person name="Hammond S."/>
            <person name="Harrison E.S.I."/>
            <person name="Hart E."/>
            <person name="Haugen E."/>
            <person name="Heath P.D."/>
            <person name="Holmes S."/>
            <person name="Holt K."/>
            <person name="Howden P.J."/>
            <person name="Hunt A.R."/>
            <person name="Hunt S.E."/>
            <person name="Hunter G."/>
            <person name="Isherwood J."/>
            <person name="James R."/>
            <person name="Johnson C."/>
            <person name="Johnson D."/>
            <person name="Joy A."/>
            <person name="Kay M."/>
            <person name="Kershaw J.K."/>
            <person name="Kibukawa M."/>
            <person name="Kimberley A.M."/>
            <person name="King A."/>
            <person name="Knights A.J."/>
            <person name="Lad H."/>
            <person name="Laird G."/>
            <person name="Lawlor S."/>
            <person name="Leongamornlert D.A."/>
            <person name="Lloyd D.M."/>
            <person name="Loveland J."/>
            <person name="Lovell J."/>
            <person name="Lush M.J."/>
            <person name="Lyne R."/>
            <person name="Martin S."/>
            <person name="Mashreghi-Mohammadi M."/>
            <person name="Matthews L."/>
            <person name="Matthews N.S.W."/>
            <person name="McLaren S."/>
            <person name="Milne S."/>
            <person name="Mistry S."/>
            <person name="Moore M.J.F."/>
            <person name="Nickerson T."/>
            <person name="O'Dell C.N."/>
            <person name="Oliver K."/>
            <person name="Palmeiri A."/>
            <person name="Palmer S.A."/>
            <person name="Parker A."/>
            <person name="Patel D."/>
            <person name="Pearce A.V."/>
            <person name="Peck A.I."/>
            <person name="Pelan S."/>
            <person name="Phelps K."/>
            <person name="Phillimore B.J."/>
            <person name="Plumb R."/>
            <person name="Rajan J."/>
            <person name="Raymond C."/>
            <person name="Rouse G."/>
            <person name="Saenphimmachak C."/>
            <person name="Sehra H.K."/>
            <person name="Sheridan E."/>
            <person name="Shownkeen R."/>
            <person name="Sims S."/>
            <person name="Skuce C.D."/>
            <person name="Smith M."/>
            <person name="Steward C."/>
            <person name="Subramanian S."/>
            <person name="Sycamore N."/>
            <person name="Tracey A."/>
            <person name="Tromans A."/>
            <person name="Van Helmond Z."/>
            <person name="Wall M."/>
            <person name="Wallis J.M."/>
            <person name="White S."/>
            <person name="Whitehead S.L."/>
            <person name="Wilkinson J.E."/>
            <person name="Willey D.L."/>
            <person name="Williams H."/>
            <person name="Wilming L."/>
            <person name="Wray P.W."/>
            <person name="Wu Z."/>
            <person name="Coulson A."/>
            <person name="Vaudin M."/>
            <person name="Sulston J.E."/>
            <person name="Durbin R.M."/>
            <person name="Hubbard T."/>
            <person name="Wooster R."/>
            <person name="Dunham I."/>
            <person name="Carter N.P."/>
            <person name="McVean G."/>
            <person name="Ross M.T."/>
            <person name="Harrow J."/>
            <person name="Olson M.V."/>
            <person name="Beck S."/>
            <person name="Rogers J."/>
            <person name="Bentley D.R."/>
        </authorList>
    </citation>
    <scope>NUCLEOTIDE SEQUENCE [LARGE SCALE GENOMIC DNA]</scope>
</reference>
<reference key="4">
    <citation type="submission" date="2005-09" db="EMBL/GenBank/DDBJ databases">
        <authorList>
            <person name="Mural R.J."/>
            <person name="Istrail S."/>
            <person name="Sutton G.G."/>
            <person name="Florea L."/>
            <person name="Halpern A.L."/>
            <person name="Mobarry C.M."/>
            <person name="Lippert R."/>
            <person name="Walenz B."/>
            <person name="Shatkay H."/>
            <person name="Dew I."/>
            <person name="Miller J.R."/>
            <person name="Flanigan M.J."/>
            <person name="Edwards N.J."/>
            <person name="Bolanos R."/>
            <person name="Fasulo D."/>
            <person name="Halldorsson B.V."/>
            <person name="Hannenhalli S."/>
            <person name="Turner R."/>
            <person name="Yooseph S."/>
            <person name="Lu F."/>
            <person name="Nusskern D.R."/>
            <person name="Shue B.C."/>
            <person name="Zheng X.H."/>
            <person name="Zhong F."/>
            <person name="Delcher A.L."/>
            <person name="Huson D.H."/>
            <person name="Kravitz S.A."/>
            <person name="Mouchard L."/>
            <person name="Reinert K."/>
            <person name="Remington K.A."/>
            <person name="Clark A.G."/>
            <person name="Waterman M.S."/>
            <person name="Eichler E.E."/>
            <person name="Adams M.D."/>
            <person name="Hunkapiller M.W."/>
            <person name="Myers E.W."/>
            <person name="Venter J.C."/>
        </authorList>
    </citation>
    <scope>NUCLEOTIDE SEQUENCE [LARGE SCALE GENOMIC DNA]</scope>
</reference>
<reference key="5">
    <citation type="journal article" date="2004" name="Genome Res.">
        <title>The status, quality, and expansion of the NIH full-length cDNA project: the Mammalian Gene Collection (MGC).</title>
        <authorList>
            <consortium name="The MGC Project Team"/>
        </authorList>
    </citation>
    <scope>NUCLEOTIDE SEQUENCE [LARGE SCALE MRNA]</scope>
    <source>
        <tissue>Eye</tissue>
    </source>
</reference>
<reference key="6">
    <citation type="journal article" date="2003" name="J. Biol. Chem.">
        <title>Synthesis of disialyl Lewis a (Le(a)) structure in colon cancer cell lines by a sialyltransferase, ST6GalNAc VI, responsible for the synthesis of alpha-series gangliosides.</title>
        <authorList>
            <person name="Tsuchida A."/>
            <person name="Okajima T."/>
            <person name="Furukawa K."/>
            <person name="Ando T."/>
            <person name="Ishida H."/>
            <person name="Yoshida A."/>
            <person name="Nakamura Y."/>
            <person name="Kannagi R."/>
            <person name="Kiso M."/>
            <person name="Furukawa K."/>
        </authorList>
    </citation>
    <scope>FUNCTION</scope>
    <scope>CATALYTIC ACTIVITY</scope>
    <scope>BIOPHYSICOCHEMICAL PROPERTIES</scope>
</reference>
<evidence type="ECO:0000250" key="1"/>
<evidence type="ECO:0000250" key="2">
    <source>
        <dbReference type="UniProtKB" id="Q9QYJ1"/>
    </source>
</evidence>
<evidence type="ECO:0000255" key="3"/>
<evidence type="ECO:0000256" key="4">
    <source>
        <dbReference type="SAM" id="MobiDB-lite"/>
    </source>
</evidence>
<evidence type="ECO:0000269" key="5">
    <source>
    </source>
</evidence>
<evidence type="ECO:0000303" key="6">
    <source>
    </source>
</evidence>
<evidence type="ECO:0000305" key="7"/>
<evidence type="ECO:0000305" key="8">
    <source>
    </source>
</evidence>
<proteinExistence type="evidence at protein level"/>
<keyword id="KW-1015">Disulfide bond</keyword>
<keyword id="KW-0325">Glycoprotein</keyword>
<keyword id="KW-0328">Glycosyltransferase</keyword>
<keyword id="KW-0333">Golgi apparatus</keyword>
<keyword id="KW-0443">Lipid metabolism</keyword>
<keyword id="KW-0472">Membrane</keyword>
<keyword id="KW-1267">Proteomics identification</keyword>
<keyword id="KW-1185">Reference proteome</keyword>
<keyword id="KW-0730">Sialic acid</keyword>
<keyword id="KW-0735">Signal-anchor</keyword>
<keyword id="KW-0808">Transferase</keyword>
<keyword id="KW-0812">Transmembrane</keyword>
<keyword id="KW-1133">Transmembrane helix</keyword>
<gene>
    <name type="primary">ST6GALNAC5</name>
    <name type="synonym">SIAT7E</name>
</gene>